<name>SWT1A_ORYSJ</name>
<gene>
    <name type="primary">SWEET1A</name>
    <name type="ordered locus">Os01g0881300</name>
    <name type="ordered locus">LOC_Os01g65880</name>
    <name type="ORF">B1065E10.2-1</name>
    <name type="ORF">OsJ_04300</name>
    <name type="ORF">P0018C10.61-1</name>
</gene>
<feature type="chain" id="PRO_0000404118" description="Bidirectional sugar transporter SWEET1a">
    <location>
        <begin position="1"/>
        <end position="273"/>
    </location>
</feature>
<feature type="topological domain" description="Extracellular" evidence="2">
    <location>
        <begin position="1"/>
        <end position="6"/>
    </location>
</feature>
<feature type="transmembrane region" description="Helical; Name=1" evidence="2">
    <location>
        <begin position="7"/>
        <end position="27"/>
    </location>
</feature>
<feature type="topological domain" description="Cytoplasmic" evidence="2">
    <location>
        <begin position="28"/>
        <end position="42"/>
    </location>
</feature>
<feature type="transmembrane region" description="Helical; Name=2" evidence="2">
    <location>
        <begin position="43"/>
        <end position="63"/>
    </location>
</feature>
<feature type="topological domain" description="Extracellular" evidence="2">
    <location>
        <begin position="64"/>
        <end position="71"/>
    </location>
</feature>
<feature type="transmembrane region" description="Helical; Name=3" evidence="2">
    <location>
        <begin position="72"/>
        <end position="92"/>
    </location>
</feature>
<feature type="topological domain" description="Cytoplasmic" evidence="2">
    <location>
        <begin position="93"/>
        <end position="101"/>
    </location>
</feature>
<feature type="transmembrane region" description="Helical; Name=4" evidence="2">
    <location>
        <begin position="102"/>
        <end position="122"/>
    </location>
</feature>
<feature type="topological domain" description="Extracellular" evidence="2">
    <location>
        <begin position="123"/>
        <end position="128"/>
    </location>
</feature>
<feature type="transmembrane region" description="Helical; Name=5" evidence="2">
    <location>
        <begin position="129"/>
        <end position="149"/>
    </location>
</feature>
<feature type="topological domain" description="Cytoplasmic" evidence="2">
    <location>
        <begin position="150"/>
        <end position="163"/>
    </location>
</feature>
<feature type="transmembrane region" description="Helical; Name=6" evidence="2">
    <location>
        <begin position="164"/>
        <end position="184"/>
    </location>
</feature>
<feature type="topological domain" description="Extracellular" evidence="2">
    <location>
        <begin position="185"/>
        <end position="188"/>
    </location>
</feature>
<feature type="transmembrane region" description="Helical; Name=7" evidence="2">
    <location>
        <begin position="189"/>
        <end position="209"/>
    </location>
</feature>
<feature type="topological domain" description="Cytoplasmic" evidence="2">
    <location>
        <begin position="210"/>
        <end position="273"/>
    </location>
</feature>
<feature type="domain" description="MtN3/slv 1">
    <location>
        <begin position="7"/>
        <end position="95"/>
    </location>
</feature>
<feature type="domain" description="MtN3/slv 2">
    <location>
        <begin position="131"/>
        <end position="214"/>
    </location>
</feature>
<dbReference type="EMBL" id="AP003227">
    <property type="protein sequence ID" value="BAC06235.1"/>
    <property type="molecule type" value="Genomic_DNA"/>
</dbReference>
<dbReference type="EMBL" id="AP003561">
    <property type="protein sequence ID" value="BAB90353.1"/>
    <property type="molecule type" value="Genomic_DNA"/>
</dbReference>
<dbReference type="EMBL" id="AP008207">
    <property type="protein sequence ID" value="BAF06912.1"/>
    <property type="molecule type" value="Genomic_DNA"/>
</dbReference>
<dbReference type="EMBL" id="AP014957">
    <property type="protein sequence ID" value="BAS75562.1"/>
    <property type="molecule type" value="Genomic_DNA"/>
</dbReference>
<dbReference type="EMBL" id="CM000138">
    <property type="protein sequence ID" value="EAZ14380.1"/>
    <property type="status" value="ALT_SEQ"/>
    <property type="molecule type" value="Genomic_DNA"/>
</dbReference>
<dbReference type="EMBL" id="AK067960">
    <property type="protein sequence ID" value="BAG90683.1"/>
    <property type="molecule type" value="mRNA"/>
</dbReference>
<dbReference type="RefSeq" id="XP_015610839.1">
    <property type="nucleotide sequence ID" value="XM_015755353.1"/>
</dbReference>
<dbReference type="SMR" id="Q8RZQ8"/>
<dbReference type="FunCoup" id="Q8RZQ8">
    <property type="interactions" value="504"/>
</dbReference>
<dbReference type="STRING" id="39947.Q8RZQ8"/>
<dbReference type="PaxDb" id="39947-Q8RZQ8"/>
<dbReference type="EnsemblPlants" id="Os01t0881300-02">
    <property type="protein sequence ID" value="Os01t0881300-02"/>
    <property type="gene ID" value="Os01g0881300"/>
</dbReference>
<dbReference type="Gramene" id="Os01t0881300-02">
    <property type="protein sequence ID" value="Os01t0881300-02"/>
    <property type="gene ID" value="Os01g0881300"/>
</dbReference>
<dbReference type="KEGG" id="dosa:Os01g0881300"/>
<dbReference type="eggNOG" id="KOG1623">
    <property type="taxonomic scope" value="Eukaryota"/>
</dbReference>
<dbReference type="HOGENOM" id="CLU_048643_1_0_1"/>
<dbReference type="InParanoid" id="Q8RZQ8"/>
<dbReference type="OMA" id="MEMGVAK"/>
<dbReference type="OrthoDB" id="409725at2759"/>
<dbReference type="Proteomes" id="UP000000763">
    <property type="component" value="Chromosome 1"/>
</dbReference>
<dbReference type="Proteomes" id="UP000007752">
    <property type="component" value="Chromosome 1"/>
</dbReference>
<dbReference type="Proteomes" id="UP000059680">
    <property type="component" value="Chromosome 1"/>
</dbReference>
<dbReference type="GO" id="GO:0016020">
    <property type="term" value="C:membrane"/>
    <property type="evidence" value="ECO:0000318"/>
    <property type="project" value="GO_Central"/>
</dbReference>
<dbReference type="GO" id="GO:0005886">
    <property type="term" value="C:plasma membrane"/>
    <property type="evidence" value="ECO:0000250"/>
    <property type="project" value="UniProtKB"/>
</dbReference>
<dbReference type="GO" id="GO:0051119">
    <property type="term" value="F:sugar transmembrane transporter activity"/>
    <property type="evidence" value="ECO:0000250"/>
    <property type="project" value="UniProtKB"/>
</dbReference>
<dbReference type="GO" id="GO:0008643">
    <property type="term" value="P:carbohydrate transport"/>
    <property type="evidence" value="ECO:0000318"/>
    <property type="project" value="GO_Central"/>
</dbReference>
<dbReference type="FunFam" id="1.20.1280.290:FF:000002">
    <property type="entry name" value="Bidirectional sugar transporter SWEET"/>
    <property type="match status" value="1"/>
</dbReference>
<dbReference type="FunFam" id="1.20.1280.290:FF:000014">
    <property type="entry name" value="Bidirectional sugar transporter SWEET"/>
    <property type="match status" value="1"/>
</dbReference>
<dbReference type="Gene3D" id="1.20.1280.290">
    <property type="match status" value="2"/>
</dbReference>
<dbReference type="InterPro" id="IPR047664">
    <property type="entry name" value="SWEET"/>
</dbReference>
<dbReference type="InterPro" id="IPR004316">
    <property type="entry name" value="SWEET_rpt"/>
</dbReference>
<dbReference type="PANTHER" id="PTHR10791:SF241">
    <property type="entry name" value="BIDIRECTIONAL SUGAR TRANSPORTER SWEET1A"/>
    <property type="match status" value="1"/>
</dbReference>
<dbReference type="PANTHER" id="PTHR10791">
    <property type="entry name" value="RAG1-ACTIVATING PROTEIN 1"/>
    <property type="match status" value="1"/>
</dbReference>
<dbReference type="Pfam" id="PF03083">
    <property type="entry name" value="MtN3_slv"/>
    <property type="match status" value="2"/>
</dbReference>
<protein>
    <recommendedName>
        <fullName>Bidirectional sugar transporter SWEET1a</fullName>
        <shortName>OsSWEET1a</shortName>
    </recommendedName>
</protein>
<organism>
    <name type="scientific">Oryza sativa subsp. japonica</name>
    <name type="common">Rice</name>
    <dbReference type="NCBI Taxonomy" id="39947"/>
    <lineage>
        <taxon>Eukaryota</taxon>
        <taxon>Viridiplantae</taxon>
        <taxon>Streptophyta</taxon>
        <taxon>Embryophyta</taxon>
        <taxon>Tracheophyta</taxon>
        <taxon>Spermatophyta</taxon>
        <taxon>Magnoliopsida</taxon>
        <taxon>Liliopsida</taxon>
        <taxon>Poales</taxon>
        <taxon>Poaceae</taxon>
        <taxon>BOP clade</taxon>
        <taxon>Oryzoideae</taxon>
        <taxon>Oryzeae</taxon>
        <taxon>Oryzinae</taxon>
        <taxon>Oryza</taxon>
        <taxon>Oryza sativa</taxon>
    </lineage>
</organism>
<sequence length="273" mass="29503">MEHIARFFFGVSGNVIALFLFLSPVVTFWRIIKKRSTEDFSGVPYNMTLLNCLLSAWYGLPFVSPNNILVTTINGTGSVIEAIYVVIFLIFAERKARLKMMGLLGLVTSIFTMVVLVSLLALHGQGRKLFCGLAATIFSICMYASPLSIMRLVIKTKSVEFMPFLLSLSVFLCGTSWFIYGLLGRDPFIAIPNGCGSFLGLMQLILYAIYRNHKGATPAAAAGKGDAADEVEDAKKAAAAVEMADAKTNKVVADDADADADGKSADDKVASQV</sequence>
<comment type="function">
    <text evidence="1">Mediates both low-affinity uptake and efflux of sugar across the plasma membrane.</text>
</comment>
<comment type="subunit">
    <text evidence="1">Forms homooligomers and/or heterooligomers.</text>
</comment>
<comment type="subcellular location">
    <subcellularLocation>
        <location evidence="1">Cell membrane</location>
        <topology evidence="1">Multi-pass membrane protein</topology>
    </subcellularLocation>
</comment>
<comment type="similarity">
    <text evidence="3">Belongs to the SWEET sugar transporter family.</text>
</comment>
<comment type="sequence caution" evidence="3">
    <conflict type="erroneous gene model prediction">
        <sequence resource="EMBL-CDS" id="EAZ14380"/>
    </conflict>
</comment>
<evidence type="ECO:0000250" key="1">
    <source>
        <dbReference type="UniProtKB" id="Q8L9J7"/>
    </source>
</evidence>
<evidence type="ECO:0000255" key="2"/>
<evidence type="ECO:0000305" key="3"/>
<proteinExistence type="evidence at transcript level"/>
<accession>Q8RZQ8</accession>
<accession>A0A0P0VBD2</accession>
<accession>A3A083</accession>
<reference key="1">
    <citation type="journal article" date="2002" name="Nature">
        <title>The genome sequence and structure of rice chromosome 1.</title>
        <authorList>
            <person name="Sasaki T."/>
            <person name="Matsumoto T."/>
            <person name="Yamamoto K."/>
            <person name="Sakata K."/>
            <person name="Baba T."/>
            <person name="Katayose Y."/>
            <person name="Wu J."/>
            <person name="Niimura Y."/>
            <person name="Cheng Z."/>
            <person name="Nagamura Y."/>
            <person name="Antonio B.A."/>
            <person name="Kanamori H."/>
            <person name="Hosokawa S."/>
            <person name="Masukawa M."/>
            <person name="Arikawa K."/>
            <person name="Chiden Y."/>
            <person name="Hayashi M."/>
            <person name="Okamoto M."/>
            <person name="Ando T."/>
            <person name="Aoki H."/>
            <person name="Arita K."/>
            <person name="Hamada M."/>
            <person name="Harada C."/>
            <person name="Hijishita S."/>
            <person name="Honda M."/>
            <person name="Ichikawa Y."/>
            <person name="Idonuma A."/>
            <person name="Iijima M."/>
            <person name="Ikeda M."/>
            <person name="Ikeno M."/>
            <person name="Ito S."/>
            <person name="Ito T."/>
            <person name="Ito Y."/>
            <person name="Ito Y."/>
            <person name="Iwabuchi A."/>
            <person name="Kamiya K."/>
            <person name="Karasawa W."/>
            <person name="Katagiri S."/>
            <person name="Kikuta A."/>
            <person name="Kobayashi N."/>
            <person name="Kono I."/>
            <person name="Machita K."/>
            <person name="Maehara T."/>
            <person name="Mizuno H."/>
            <person name="Mizubayashi T."/>
            <person name="Mukai Y."/>
            <person name="Nagasaki H."/>
            <person name="Nakashima M."/>
            <person name="Nakama Y."/>
            <person name="Nakamichi Y."/>
            <person name="Nakamura M."/>
            <person name="Namiki N."/>
            <person name="Negishi M."/>
            <person name="Ohta I."/>
            <person name="Ono N."/>
            <person name="Saji S."/>
            <person name="Sakai K."/>
            <person name="Shibata M."/>
            <person name="Shimokawa T."/>
            <person name="Shomura A."/>
            <person name="Song J."/>
            <person name="Takazaki Y."/>
            <person name="Terasawa K."/>
            <person name="Tsuji K."/>
            <person name="Waki K."/>
            <person name="Yamagata H."/>
            <person name="Yamane H."/>
            <person name="Yoshiki S."/>
            <person name="Yoshihara R."/>
            <person name="Yukawa K."/>
            <person name="Zhong H."/>
            <person name="Iwama H."/>
            <person name="Endo T."/>
            <person name="Ito H."/>
            <person name="Hahn J.H."/>
            <person name="Kim H.-I."/>
            <person name="Eun M.-Y."/>
            <person name="Yano M."/>
            <person name="Jiang J."/>
            <person name="Gojobori T."/>
        </authorList>
    </citation>
    <scope>NUCLEOTIDE SEQUENCE [LARGE SCALE GENOMIC DNA]</scope>
    <source>
        <strain>cv. Nipponbare</strain>
    </source>
</reference>
<reference key="2">
    <citation type="journal article" date="2005" name="Nature">
        <title>The map-based sequence of the rice genome.</title>
        <authorList>
            <consortium name="International rice genome sequencing project (IRGSP)"/>
        </authorList>
    </citation>
    <scope>NUCLEOTIDE SEQUENCE [LARGE SCALE GENOMIC DNA]</scope>
    <source>
        <strain>cv. Nipponbare</strain>
    </source>
</reference>
<reference key="3">
    <citation type="journal article" date="2008" name="Nucleic Acids Res.">
        <title>The rice annotation project database (RAP-DB): 2008 update.</title>
        <authorList>
            <consortium name="The rice annotation project (RAP)"/>
        </authorList>
    </citation>
    <scope>GENOME REANNOTATION</scope>
    <source>
        <strain>cv. Nipponbare</strain>
    </source>
</reference>
<reference key="4">
    <citation type="journal article" date="2013" name="Rice">
        <title>Improvement of the Oryza sativa Nipponbare reference genome using next generation sequence and optical map data.</title>
        <authorList>
            <person name="Kawahara Y."/>
            <person name="de la Bastide M."/>
            <person name="Hamilton J.P."/>
            <person name="Kanamori H."/>
            <person name="McCombie W.R."/>
            <person name="Ouyang S."/>
            <person name="Schwartz D.C."/>
            <person name="Tanaka T."/>
            <person name="Wu J."/>
            <person name="Zhou S."/>
            <person name="Childs K.L."/>
            <person name="Davidson R.M."/>
            <person name="Lin H."/>
            <person name="Quesada-Ocampo L."/>
            <person name="Vaillancourt B."/>
            <person name="Sakai H."/>
            <person name="Lee S.S."/>
            <person name="Kim J."/>
            <person name="Numa H."/>
            <person name="Itoh T."/>
            <person name="Buell C.R."/>
            <person name="Matsumoto T."/>
        </authorList>
    </citation>
    <scope>GENOME REANNOTATION</scope>
    <source>
        <strain>cv. Nipponbare</strain>
    </source>
</reference>
<reference key="5">
    <citation type="journal article" date="2005" name="PLoS Biol.">
        <title>The genomes of Oryza sativa: a history of duplications.</title>
        <authorList>
            <person name="Yu J."/>
            <person name="Wang J."/>
            <person name="Lin W."/>
            <person name="Li S."/>
            <person name="Li H."/>
            <person name="Zhou J."/>
            <person name="Ni P."/>
            <person name="Dong W."/>
            <person name="Hu S."/>
            <person name="Zeng C."/>
            <person name="Zhang J."/>
            <person name="Zhang Y."/>
            <person name="Li R."/>
            <person name="Xu Z."/>
            <person name="Li S."/>
            <person name="Li X."/>
            <person name="Zheng H."/>
            <person name="Cong L."/>
            <person name="Lin L."/>
            <person name="Yin J."/>
            <person name="Geng J."/>
            <person name="Li G."/>
            <person name="Shi J."/>
            <person name="Liu J."/>
            <person name="Lv H."/>
            <person name="Li J."/>
            <person name="Wang J."/>
            <person name="Deng Y."/>
            <person name="Ran L."/>
            <person name="Shi X."/>
            <person name="Wang X."/>
            <person name="Wu Q."/>
            <person name="Li C."/>
            <person name="Ren X."/>
            <person name="Wang J."/>
            <person name="Wang X."/>
            <person name="Li D."/>
            <person name="Liu D."/>
            <person name="Zhang X."/>
            <person name="Ji Z."/>
            <person name="Zhao W."/>
            <person name="Sun Y."/>
            <person name="Zhang Z."/>
            <person name="Bao J."/>
            <person name="Han Y."/>
            <person name="Dong L."/>
            <person name="Ji J."/>
            <person name="Chen P."/>
            <person name="Wu S."/>
            <person name="Liu J."/>
            <person name="Xiao Y."/>
            <person name="Bu D."/>
            <person name="Tan J."/>
            <person name="Yang L."/>
            <person name="Ye C."/>
            <person name="Zhang J."/>
            <person name="Xu J."/>
            <person name="Zhou Y."/>
            <person name="Yu Y."/>
            <person name="Zhang B."/>
            <person name="Zhuang S."/>
            <person name="Wei H."/>
            <person name="Liu B."/>
            <person name="Lei M."/>
            <person name="Yu H."/>
            <person name="Li Y."/>
            <person name="Xu H."/>
            <person name="Wei S."/>
            <person name="He X."/>
            <person name="Fang L."/>
            <person name="Zhang Z."/>
            <person name="Zhang Y."/>
            <person name="Huang X."/>
            <person name="Su Z."/>
            <person name="Tong W."/>
            <person name="Li J."/>
            <person name="Tong Z."/>
            <person name="Li S."/>
            <person name="Ye J."/>
            <person name="Wang L."/>
            <person name="Fang L."/>
            <person name="Lei T."/>
            <person name="Chen C.-S."/>
            <person name="Chen H.-C."/>
            <person name="Xu Z."/>
            <person name="Li H."/>
            <person name="Huang H."/>
            <person name="Zhang F."/>
            <person name="Xu H."/>
            <person name="Li N."/>
            <person name="Zhao C."/>
            <person name="Li S."/>
            <person name="Dong L."/>
            <person name="Huang Y."/>
            <person name="Li L."/>
            <person name="Xi Y."/>
            <person name="Qi Q."/>
            <person name="Li W."/>
            <person name="Zhang B."/>
            <person name="Hu W."/>
            <person name="Zhang Y."/>
            <person name="Tian X."/>
            <person name="Jiao Y."/>
            <person name="Liang X."/>
            <person name="Jin J."/>
            <person name="Gao L."/>
            <person name="Zheng W."/>
            <person name="Hao B."/>
            <person name="Liu S.-M."/>
            <person name="Wang W."/>
            <person name="Yuan L."/>
            <person name="Cao M."/>
            <person name="McDermott J."/>
            <person name="Samudrala R."/>
            <person name="Wang J."/>
            <person name="Wong G.K.-S."/>
            <person name="Yang H."/>
        </authorList>
    </citation>
    <scope>NUCLEOTIDE SEQUENCE [LARGE SCALE GENOMIC DNA]</scope>
    <source>
        <strain>cv. Nipponbare</strain>
    </source>
</reference>
<reference key="6">
    <citation type="journal article" date="2003" name="Science">
        <title>Collection, mapping, and annotation of over 28,000 cDNA clones from japonica rice.</title>
        <authorList>
            <consortium name="The rice full-length cDNA consortium"/>
        </authorList>
    </citation>
    <scope>NUCLEOTIDE SEQUENCE [LARGE SCALE MRNA]</scope>
    <source>
        <strain>cv. Nipponbare</strain>
    </source>
</reference>
<reference key="7">
    <citation type="journal article" date="2010" name="Nature">
        <title>Sugar transporters for intercellular exchange and nutrition of pathogens.</title>
        <authorList>
            <person name="Chen L.-Q."/>
            <person name="Hou B.-H."/>
            <person name="Lalonde S."/>
            <person name="Takanaga H."/>
            <person name="Hartung M.L."/>
            <person name="Qu X.-Q."/>
            <person name="Guo W.-J."/>
            <person name="Kim J.-G."/>
            <person name="Underwood W."/>
            <person name="Chaudhuri B."/>
            <person name="Chermak D."/>
            <person name="Antony G."/>
            <person name="White F.F."/>
            <person name="Somerville S.C."/>
            <person name="Mudgett M.B."/>
            <person name="Frommer W.B."/>
        </authorList>
    </citation>
    <scope>GENE FAMILY</scope>
    <scope>NOMENCLATURE</scope>
</reference>
<keyword id="KW-1003">Cell membrane</keyword>
<keyword id="KW-0472">Membrane</keyword>
<keyword id="KW-1185">Reference proteome</keyword>
<keyword id="KW-0677">Repeat</keyword>
<keyword id="KW-0762">Sugar transport</keyword>
<keyword id="KW-0812">Transmembrane</keyword>
<keyword id="KW-1133">Transmembrane helix</keyword>
<keyword id="KW-0813">Transport</keyword>